<organism>
    <name type="scientific">Lactobacillus acidophilus (strain ATCC 700396 / NCK56 / N2 / NCFM)</name>
    <dbReference type="NCBI Taxonomy" id="272621"/>
    <lineage>
        <taxon>Bacteria</taxon>
        <taxon>Bacillati</taxon>
        <taxon>Bacillota</taxon>
        <taxon>Bacilli</taxon>
        <taxon>Lactobacillales</taxon>
        <taxon>Lactobacillaceae</taxon>
        <taxon>Lactobacillus</taxon>
    </lineage>
</organism>
<proteinExistence type="inferred from homology"/>
<comment type="function">
    <text evidence="1">Catalyzes the reversible conversion of ribose-5-phosphate to ribulose 5-phosphate.</text>
</comment>
<comment type="catalytic activity">
    <reaction evidence="1">
        <text>aldehydo-D-ribose 5-phosphate = D-ribulose 5-phosphate</text>
        <dbReference type="Rhea" id="RHEA:14657"/>
        <dbReference type="ChEBI" id="CHEBI:58121"/>
        <dbReference type="ChEBI" id="CHEBI:58273"/>
        <dbReference type="EC" id="5.3.1.6"/>
    </reaction>
</comment>
<comment type="pathway">
    <text evidence="1">Carbohydrate degradation; pentose phosphate pathway; D-ribose 5-phosphate from D-ribulose 5-phosphate (non-oxidative stage): step 1/1.</text>
</comment>
<comment type="subunit">
    <text evidence="1">Homodimer.</text>
</comment>
<comment type="similarity">
    <text evidence="1">Belongs to the ribose 5-phosphate isomerase family.</text>
</comment>
<evidence type="ECO:0000255" key="1">
    <source>
        <dbReference type="HAMAP-Rule" id="MF_00170"/>
    </source>
</evidence>
<name>RPIA_LACAC</name>
<protein>
    <recommendedName>
        <fullName evidence="1">Ribose-5-phosphate isomerase A</fullName>
        <ecNumber evidence="1">5.3.1.6</ecNumber>
    </recommendedName>
    <alternativeName>
        <fullName evidence="1">Phosphoriboisomerase A</fullName>
        <shortName evidence="1">PRI</shortName>
    </alternativeName>
</protein>
<sequence length="230" mass="25346">MDKKEQDRLKKEAAEKAANMVQSGMILGVGTGSTVAFFIDALGKRKDEEDLKLKAIVTTSNRSKKQLESLGFEVSELADIDQADLTVDGSDRVADNLDGIKGGGGALTLEKNVAINSKKIVWIVDESKLVHRLSGFPLPVEVLPISCEQNFRRFEQEGLKPQWRTDGDKRYITHYGNYIIDLAVDPIPAPHGLADYLDHTVGVVEHGLFLDMCDEVIIAHSDGTIEDKIK</sequence>
<reference key="1">
    <citation type="journal article" date="2005" name="Proc. Natl. Acad. Sci. U.S.A.">
        <title>Complete genome sequence of the probiotic lactic acid bacterium Lactobacillus acidophilus NCFM.</title>
        <authorList>
            <person name="Altermann E."/>
            <person name="Russell W.M."/>
            <person name="Azcarate-Peril M.A."/>
            <person name="Barrangou R."/>
            <person name="Buck B.L."/>
            <person name="McAuliffe O."/>
            <person name="Souther N."/>
            <person name="Dobson A."/>
            <person name="Duong T."/>
            <person name="Callanan M."/>
            <person name="Lick S."/>
            <person name="Hamrick A."/>
            <person name="Cano R."/>
            <person name="Klaenhammer T.R."/>
        </authorList>
    </citation>
    <scope>NUCLEOTIDE SEQUENCE [LARGE SCALE GENOMIC DNA]</scope>
    <source>
        <strain>ATCC 700396 / NCK56 / N2 / NCFM</strain>
    </source>
</reference>
<keyword id="KW-0413">Isomerase</keyword>
<keyword id="KW-1185">Reference proteome</keyword>
<accession>Q5FLF6</accession>
<gene>
    <name evidence="1" type="primary">rpiA</name>
    <name type="ordered locus">LBA0588</name>
</gene>
<dbReference type="EC" id="5.3.1.6" evidence="1"/>
<dbReference type="EMBL" id="CP000033">
    <property type="protein sequence ID" value="AAV42468.1"/>
    <property type="molecule type" value="Genomic_DNA"/>
</dbReference>
<dbReference type="RefSeq" id="WP_011254196.1">
    <property type="nucleotide sequence ID" value="NC_006814.3"/>
</dbReference>
<dbReference type="RefSeq" id="YP_193499.1">
    <property type="nucleotide sequence ID" value="NC_006814.3"/>
</dbReference>
<dbReference type="SMR" id="Q5FLF6"/>
<dbReference type="STRING" id="272621.LBA0588"/>
<dbReference type="KEGG" id="lac:LBA0588"/>
<dbReference type="PATRIC" id="fig|272621.13.peg.562"/>
<dbReference type="eggNOG" id="COG0120">
    <property type="taxonomic scope" value="Bacteria"/>
</dbReference>
<dbReference type="HOGENOM" id="CLU_056590_1_0_9"/>
<dbReference type="OrthoDB" id="5870696at2"/>
<dbReference type="BioCyc" id="LACI272621:G1G49-613-MONOMER"/>
<dbReference type="UniPathway" id="UPA00115">
    <property type="reaction ID" value="UER00412"/>
</dbReference>
<dbReference type="Proteomes" id="UP000006381">
    <property type="component" value="Chromosome"/>
</dbReference>
<dbReference type="GO" id="GO:0004751">
    <property type="term" value="F:ribose-5-phosphate isomerase activity"/>
    <property type="evidence" value="ECO:0007669"/>
    <property type="project" value="UniProtKB-UniRule"/>
</dbReference>
<dbReference type="GO" id="GO:0009052">
    <property type="term" value="P:pentose-phosphate shunt, non-oxidative branch"/>
    <property type="evidence" value="ECO:0007669"/>
    <property type="project" value="UniProtKB-UniRule"/>
</dbReference>
<dbReference type="CDD" id="cd01398">
    <property type="entry name" value="RPI_A"/>
    <property type="match status" value="1"/>
</dbReference>
<dbReference type="FunFam" id="3.40.50.1360:FF:000001">
    <property type="entry name" value="Ribose-5-phosphate isomerase A"/>
    <property type="match status" value="1"/>
</dbReference>
<dbReference type="Gene3D" id="3.30.70.260">
    <property type="match status" value="1"/>
</dbReference>
<dbReference type="Gene3D" id="3.40.50.1360">
    <property type="match status" value="1"/>
</dbReference>
<dbReference type="HAMAP" id="MF_00170">
    <property type="entry name" value="Rib_5P_isom_A"/>
    <property type="match status" value="1"/>
</dbReference>
<dbReference type="InterPro" id="IPR037171">
    <property type="entry name" value="NagB/RpiA_transferase-like"/>
</dbReference>
<dbReference type="InterPro" id="IPR050262">
    <property type="entry name" value="Ribose-5P_isomerase"/>
</dbReference>
<dbReference type="InterPro" id="IPR020672">
    <property type="entry name" value="Ribose5P_isomerase_typA_subgr"/>
</dbReference>
<dbReference type="InterPro" id="IPR004788">
    <property type="entry name" value="Ribose5P_isomerase_type_A"/>
</dbReference>
<dbReference type="NCBIfam" id="NF001924">
    <property type="entry name" value="PRK00702.1"/>
    <property type="match status" value="1"/>
</dbReference>
<dbReference type="NCBIfam" id="TIGR00021">
    <property type="entry name" value="rpiA"/>
    <property type="match status" value="1"/>
</dbReference>
<dbReference type="PANTHER" id="PTHR43748">
    <property type="entry name" value="RIBOSE-5-PHOSPHATE ISOMERASE 3, CHLOROPLASTIC-RELATED"/>
    <property type="match status" value="1"/>
</dbReference>
<dbReference type="PANTHER" id="PTHR43748:SF3">
    <property type="entry name" value="RIBOSE-5-PHOSPHATE ISOMERASE 3, CHLOROPLASTIC-RELATED"/>
    <property type="match status" value="1"/>
</dbReference>
<dbReference type="Pfam" id="PF06026">
    <property type="entry name" value="Rib_5-P_isom_A"/>
    <property type="match status" value="1"/>
</dbReference>
<dbReference type="SUPFAM" id="SSF75445">
    <property type="entry name" value="D-ribose-5-phosphate isomerase (RpiA), lid domain"/>
    <property type="match status" value="1"/>
</dbReference>
<dbReference type="SUPFAM" id="SSF100950">
    <property type="entry name" value="NagB/RpiA/CoA transferase-like"/>
    <property type="match status" value="1"/>
</dbReference>
<feature type="chain" id="PRO_0000158425" description="Ribose-5-phosphate isomerase A">
    <location>
        <begin position="1"/>
        <end position="230"/>
    </location>
</feature>
<feature type="active site" description="Proton acceptor" evidence="1">
    <location>
        <position position="110"/>
    </location>
</feature>
<feature type="binding site" evidence="1">
    <location>
        <begin position="31"/>
        <end position="34"/>
    </location>
    <ligand>
        <name>substrate</name>
    </ligand>
</feature>
<feature type="binding site" evidence="1">
    <location>
        <begin position="88"/>
        <end position="91"/>
    </location>
    <ligand>
        <name>substrate</name>
    </ligand>
</feature>
<feature type="binding site" evidence="1">
    <location>
        <begin position="101"/>
        <end position="104"/>
    </location>
    <ligand>
        <name>substrate</name>
    </ligand>
</feature>
<feature type="binding site" evidence="1">
    <location>
        <position position="128"/>
    </location>
    <ligand>
        <name>substrate</name>
    </ligand>
</feature>